<comment type="function">
    <text evidence="1">Catalyzes the conversion of uracil and 5-phospho-alpha-D-ribose 1-diphosphate (PRPP) to UMP and diphosphate.</text>
</comment>
<comment type="catalytic activity">
    <reaction evidence="1">
        <text>UMP + diphosphate = 5-phospho-alpha-D-ribose 1-diphosphate + uracil</text>
        <dbReference type="Rhea" id="RHEA:13017"/>
        <dbReference type="ChEBI" id="CHEBI:17568"/>
        <dbReference type="ChEBI" id="CHEBI:33019"/>
        <dbReference type="ChEBI" id="CHEBI:57865"/>
        <dbReference type="ChEBI" id="CHEBI:58017"/>
        <dbReference type="EC" id="2.4.2.9"/>
    </reaction>
</comment>
<comment type="cofactor">
    <cofactor evidence="1">
        <name>Mg(2+)</name>
        <dbReference type="ChEBI" id="CHEBI:18420"/>
    </cofactor>
    <text evidence="1">Binds 1 Mg(2+) ion per subunit. The magnesium is bound as Mg-PRPP.</text>
</comment>
<comment type="activity regulation">
    <text evidence="1">Allosterically activated by GTP.</text>
</comment>
<comment type="pathway">
    <text evidence="1">Pyrimidine metabolism; UMP biosynthesis via salvage pathway; UMP from uracil: step 1/1.</text>
</comment>
<comment type="similarity">
    <text evidence="1">Belongs to the UPRTase family.</text>
</comment>
<proteinExistence type="inferred from homology"/>
<name>UPP_HALSA</name>
<protein>
    <recommendedName>
        <fullName evidence="1">Uracil phosphoribosyltransferase</fullName>
        <ecNumber evidence="1">2.4.2.9</ecNumber>
    </recommendedName>
    <alternativeName>
        <fullName evidence="1">UMP pyrophosphorylase</fullName>
    </alternativeName>
    <alternativeName>
        <fullName evidence="1">UPRTase</fullName>
    </alternativeName>
</protein>
<evidence type="ECO:0000255" key="1">
    <source>
        <dbReference type="HAMAP-Rule" id="MF_01218"/>
    </source>
</evidence>
<reference key="1">
    <citation type="journal article" date="2000" name="Proc. Natl. Acad. Sci. U.S.A.">
        <title>Genome sequence of Halobacterium species NRC-1.</title>
        <authorList>
            <person name="Ng W.V."/>
            <person name="Kennedy S.P."/>
            <person name="Mahairas G.G."/>
            <person name="Berquist B."/>
            <person name="Pan M."/>
            <person name="Shukla H.D."/>
            <person name="Lasky S.R."/>
            <person name="Baliga N.S."/>
            <person name="Thorsson V."/>
            <person name="Sbrogna J."/>
            <person name="Swartzell S."/>
            <person name="Weir D."/>
            <person name="Hall J."/>
            <person name="Dahl T.A."/>
            <person name="Welti R."/>
            <person name="Goo Y.A."/>
            <person name="Leithauser B."/>
            <person name="Keller K."/>
            <person name="Cruz R."/>
            <person name="Danson M.J."/>
            <person name="Hough D.W."/>
            <person name="Maddocks D.G."/>
            <person name="Jablonski P.E."/>
            <person name="Krebs M.P."/>
            <person name="Angevine C.M."/>
            <person name="Dale H."/>
            <person name="Isenbarger T.A."/>
            <person name="Peck R.F."/>
            <person name="Pohlschroder M."/>
            <person name="Spudich J.L."/>
            <person name="Jung K.-H."/>
            <person name="Alam M."/>
            <person name="Freitas T."/>
            <person name="Hou S."/>
            <person name="Daniels C.J."/>
            <person name="Dennis P.P."/>
            <person name="Omer A.D."/>
            <person name="Ebhardt H."/>
            <person name="Lowe T.M."/>
            <person name="Liang P."/>
            <person name="Riley M."/>
            <person name="Hood L."/>
            <person name="DasSarma S."/>
        </authorList>
    </citation>
    <scope>NUCLEOTIDE SEQUENCE [LARGE SCALE GENOMIC DNA]</scope>
    <source>
        <strain>ATCC 700922 / JCM 11081 / NRC-1</strain>
    </source>
</reference>
<dbReference type="EC" id="2.4.2.9" evidence="1"/>
<dbReference type="EMBL" id="AE004437">
    <property type="protein sequence ID" value="AAG20416.1"/>
    <property type="molecule type" value="Genomic_DNA"/>
</dbReference>
<dbReference type="PIR" id="D84381">
    <property type="entry name" value="D84381"/>
</dbReference>
<dbReference type="RefSeq" id="WP_010903718.1">
    <property type="nucleotide sequence ID" value="NC_002607.1"/>
</dbReference>
<dbReference type="SMR" id="Q9HN05"/>
<dbReference type="STRING" id="64091.VNG_2305C"/>
<dbReference type="PaxDb" id="64091-VNG_2305C"/>
<dbReference type="GeneID" id="89348337"/>
<dbReference type="KEGG" id="hal:VNG_2305C"/>
<dbReference type="PATRIC" id="fig|64091.14.peg.1780"/>
<dbReference type="HOGENOM" id="CLU_067096_2_0_2"/>
<dbReference type="InParanoid" id="Q9HN05"/>
<dbReference type="OrthoDB" id="80352at2157"/>
<dbReference type="PhylomeDB" id="Q9HN05"/>
<dbReference type="UniPathway" id="UPA00574">
    <property type="reaction ID" value="UER00636"/>
</dbReference>
<dbReference type="Proteomes" id="UP000000554">
    <property type="component" value="Chromosome"/>
</dbReference>
<dbReference type="GO" id="GO:0005737">
    <property type="term" value="C:cytoplasm"/>
    <property type="evidence" value="ECO:0000318"/>
    <property type="project" value="GO_Central"/>
</dbReference>
<dbReference type="GO" id="GO:0005525">
    <property type="term" value="F:GTP binding"/>
    <property type="evidence" value="ECO:0007669"/>
    <property type="project" value="UniProtKB-KW"/>
</dbReference>
<dbReference type="GO" id="GO:0000287">
    <property type="term" value="F:magnesium ion binding"/>
    <property type="evidence" value="ECO:0007669"/>
    <property type="project" value="UniProtKB-UniRule"/>
</dbReference>
<dbReference type="GO" id="GO:0004845">
    <property type="term" value="F:uracil phosphoribosyltransferase activity"/>
    <property type="evidence" value="ECO:0000318"/>
    <property type="project" value="GO_Central"/>
</dbReference>
<dbReference type="GO" id="GO:0044206">
    <property type="term" value="P:UMP salvage"/>
    <property type="evidence" value="ECO:0007669"/>
    <property type="project" value="UniProtKB-UniRule"/>
</dbReference>
<dbReference type="GO" id="GO:0006223">
    <property type="term" value="P:uracil salvage"/>
    <property type="evidence" value="ECO:0007669"/>
    <property type="project" value="InterPro"/>
</dbReference>
<dbReference type="CDD" id="cd06223">
    <property type="entry name" value="PRTases_typeI"/>
    <property type="match status" value="1"/>
</dbReference>
<dbReference type="Gene3D" id="3.40.50.2020">
    <property type="match status" value="1"/>
</dbReference>
<dbReference type="HAMAP" id="MF_01218_A">
    <property type="entry name" value="Upp_A"/>
    <property type="match status" value="1"/>
</dbReference>
<dbReference type="InterPro" id="IPR000836">
    <property type="entry name" value="PRibTrfase_dom"/>
</dbReference>
<dbReference type="InterPro" id="IPR029057">
    <property type="entry name" value="PRTase-like"/>
</dbReference>
<dbReference type="InterPro" id="IPR034331">
    <property type="entry name" value="Upp_A"/>
</dbReference>
<dbReference type="InterPro" id="IPR005765">
    <property type="entry name" value="Ura_phspho_trans"/>
</dbReference>
<dbReference type="NCBIfam" id="NF001097">
    <property type="entry name" value="PRK00129.1"/>
    <property type="match status" value="1"/>
</dbReference>
<dbReference type="NCBIfam" id="TIGR01091">
    <property type="entry name" value="upp"/>
    <property type="match status" value="1"/>
</dbReference>
<dbReference type="Pfam" id="PF14681">
    <property type="entry name" value="UPRTase"/>
    <property type="match status" value="1"/>
</dbReference>
<dbReference type="SUPFAM" id="SSF53271">
    <property type="entry name" value="PRTase-like"/>
    <property type="match status" value="1"/>
</dbReference>
<sequence length="227" mass="24230">MTIEDRGDAHVITHSLAKHTLSRLRDTTTEQVSFRKGLVKLGRISGYEIIDGAMETEFTAFETPLTETTGERVTGLDDVVIINVLRAATPFVEGLLKAFPRAKQGVISAGRDEDAGMDADGEFPITVDYVKLPDISEGDTVIVADPMLATGSTMCTVLDHVTDEMPAAGVEDLFVLSAVSAPDGLLRVGDQFPDADLLTVAIDDTLTDDGYIVPGLGDAGDRAFRTT</sequence>
<keyword id="KW-0021">Allosteric enzyme</keyword>
<keyword id="KW-0328">Glycosyltransferase</keyword>
<keyword id="KW-0342">GTP-binding</keyword>
<keyword id="KW-0460">Magnesium</keyword>
<keyword id="KW-0547">Nucleotide-binding</keyword>
<keyword id="KW-1185">Reference proteome</keyword>
<keyword id="KW-0808">Transferase</keyword>
<gene>
    <name evidence="1" type="primary">upp</name>
    <name type="ordered locus">VNG_2305C</name>
</gene>
<organism>
    <name type="scientific">Halobacterium salinarum (strain ATCC 700922 / JCM 11081 / NRC-1)</name>
    <name type="common">Halobacterium halobium</name>
    <dbReference type="NCBI Taxonomy" id="64091"/>
    <lineage>
        <taxon>Archaea</taxon>
        <taxon>Methanobacteriati</taxon>
        <taxon>Methanobacteriota</taxon>
        <taxon>Stenosarchaea group</taxon>
        <taxon>Halobacteria</taxon>
        <taxon>Halobacteriales</taxon>
        <taxon>Halobacteriaceae</taxon>
        <taxon>Halobacterium</taxon>
        <taxon>Halobacterium salinarum NRC-34001</taxon>
    </lineage>
</organism>
<feature type="chain" id="PRO_0000120919" description="Uracil phosphoribosyltransferase">
    <location>
        <begin position="1"/>
        <end position="227"/>
    </location>
</feature>
<feature type="binding site" evidence="1">
    <location>
        <begin position="36"/>
        <end position="40"/>
    </location>
    <ligand>
        <name>GTP</name>
        <dbReference type="ChEBI" id="CHEBI:37565"/>
    </ligand>
</feature>
<feature type="binding site" evidence="1">
    <location>
        <position position="86"/>
    </location>
    <ligand>
        <name>5-phospho-alpha-D-ribose 1-diphosphate</name>
        <dbReference type="ChEBI" id="CHEBI:58017"/>
    </ligand>
</feature>
<feature type="binding site" evidence="1">
    <location>
        <position position="111"/>
    </location>
    <ligand>
        <name>5-phospho-alpha-D-ribose 1-diphosphate</name>
        <dbReference type="ChEBI" id="CHEBI:58017"/>
    </ligand>
</feature>
<feature type="binding site" evidence="1">
    <location>
        <begin position="145"/>
        <end position="153"/>
    </location>
    <ligand>
        <name>5-phospho-alpha-D-ribose 1-diphosphate</name>
        <dbReference type="ChEBI" id="CHEBI:58017"/>
    </ligand>
</feature>
<feature type="binding site" evidence="1">
    <location>
        <position position="212"/>
    </location>
    <ligand>
        <name>uracil</name>
        <dbReference type="ChEBI" id="CHEBI:17568"/>
    </ligand>
</feature>
<feature type="binding site" evidence="1">
    <location>
        <begin position="217"/>
        <end position="219"/>
    </location>
    <ligand>
        <name>uracil</name>
        <dbReference type="ChEBI" id="CHEBI:17568"/>
    </ligand>
</feature>
<feature type="binding site" evidence="1">
    <location>
        <position position="218"/>
    </location>
    <ligand>
        <name>5-phospho-alpha-D-ribose 1-diphosphate</name>
        <dbReference type="ChEBI" id="CHEBI:58017"/>
    </ligand>
</feature>
<accession>Q9HN05</accession>